<protein>
    <recommendedName>
        <fullName>Protein kinase C and casein kinase substrate in neurons protein 1</fullName>
    </recommendedName>
    <alternativeName>
        <fullName>Syndapin-1</fullName>
    </alternativeName>
</protein>
<name>PACN1_DANRE</name>
<reference key="1">
    <citation type="journal article" date="2013" name="Nature">
        <title>The zebrafish reference genome sequence and its relationship to the human genome.</title>
        <authorList>
            <person name="Howe K."/>
            <person name="Clark M.D."/>
            <person name="Torroja C.F."/>
            <person name="Torrance J."/>
            <person name="Berthelot C."/>
            <person name="Muffato M."/>
            <person name="Collins J.E."/>
            <person name="Humphray S."/>
            <person name="McLaren K."/>
            <person name="Matthews L."/>
            <person name="McLaren S."/>
            <person name="Sealy I."/>
            <person name="Caccamo M."/>
            <person name="Churcher C."/>
            <person name="Scott C."/>
            <person name="Barrett J.C."/>
            <person name="Koch R."/>
            <person name="Rauch G.J."/>
            <person name="White S."/>
            <person name="Chow W."/>
            <person name="Kilian B."/>
            <person name="Quintais L.T."/>
            <person name="Guerra-Assuncao J.A."/>
            <person name="Zhou Y."/>
            <person name="Gu Y."/>
            <person name="Yen J."/>
            <person name="Vogel J.H."/>
            <person name="Eyre T."/>
            <person name="Redmond S."/>
            <person name="Banerjee R."/>
            <person name="Chi J."/>
            <person name="Fu B."/>
            <person name="Langley E."/>
            <person name="Maguire S.F."/>
            <person name="Laird G.K."/>
            <person name="Lloyd D."/>
            <person name="Kenyon E."/>
            <person name="Donaldson S."/>
            <person name="Sehra H."/>
            <person name="Almeida-King J."/>
            <person name="Loveland J."/>
            <person name="Trevanion S."/>
            <person name="Jones M."/>
            <person name="Quail M."/>
            <person name="Willey D."/>
            <person name="Hunt A."/>
            <person name="Burton J."/>
            <person name="Sims S."/>
            <person name="McLay K."/>
            <person name="Plumb B."/>
            <person name="Davis J."/>
            <person name="Clee C."/>
            <person name="Oliver K."/>
            <person name="Clark R."/>
            <person name="Riddle C."/>
            <person name="Elliot D."/>
            <person name="Threadgold G."/>
            <person name="Harden G."/>
            <person name="Ware D."/>
            <person name="Begum S."/>
            <person name="Mortimore B."/>
            <person name="Kerry G."/>
            <person name="Heath P."/>
            <person name="Phillimore B."/>
            <person name="Tracey A."/>
            <person name="Corby N."/>
            <person name="Dunn M."/>
            <person name="Johnson C."/>
            <person name="Wood J."/>
            <person name="Clark S."/>
            <person name="Pelan S."/>
            <person name="Griffiths G."/>
            <person name="Smith M."/>
            <person name="Glithero R."/>
            <person name="Howden P."/>
            <person name="Barker N."/>
            <person name="Lloyd C."/>
            <person name="Stevens C."/>
            <person name="Harley J."/>
            <person name="Holt K."/>
            <person name="Panagiotidis G."/>
            <person name="Lovell J."/>
            <person name="Beasley H."/>
            <person name="Henderson C."/>
            <person name="Gordon D."/>
            <person name="Auger K."/>
            <person name="Wright D."/>
            <person name="Collins J."/>
            <person name="Raisen C."/>
            <person name="Dyer L."/>
            <person name="Leung K."/>
            <person name="Robertson L."/>
            <person name="Ambridge K."/>
            <person name="Leongamornlert D."/>
            <person name="McGuire S."/>
            <person name="Gilderthorp R."/>
            <person name="Griffiths C."/>
            <person name="Manthravadi D."/>
            <person name="Nichol S."/>
            <person name="Barker G."/>
            <person name="Whitehead S."/>
            <person name="Kay M."/>
            <person name="Brown J."/>
            <person name="Murnane C."/>
            <person name="Gray E."/>
            <person name="Humphries M."/>
            <person name="Sycamore N."/>
            <person name="Barker D."/>
            <person name="Saunders D."/>
            <person name="Wallis J."/>
            <person name="Babbage A."/>
            <person name="Hammond S."/>
            <person name="Mashreghi-Mohammadi M."/>
            <person name="Barr L."/>
            <person name="Martin S."/>
            <person name="Wray P."/>
            <person name="Ellington A."/>
            <person name="Matthews N."/>
            <person name="Ellwood M."/>
            <person name="Woodmansey R."/>
            <person name="Clark G."/>
            <person name="Cooper J."/>
            <person name="Tromans A."/>
            <person name="Grafham D."/>
            <person name="Skuce C."/>
            <person name="Pandian R."/>
            <person name="Andrews R."/>
            <person name="Harrison E."/>
            <person name="Kimberley A."/>
            <person name="Garnett J."/>
            <person name="Fosker N."/>
            <person name="Hall R."/>
            <person name="Garner P."/>
            <person name="Kelly D."/>
            <person name="Bird C."/>
            <person name="Palmer S."/>
            <person name="Gehring I."/>
            <person name="Berger A."/>
            <person name="Dooley C.M."/>
            <person name="Ersan-Urun Z."/>
            <person name="Eser C."/>
            <person name="Geiger H."/>
            <person name="Geisler M."/>
            <person name="Karotki L."/>
            <person name="Kirn A."/>
            <person name="Konantz J."/>
            <person name="Konantz M."/>
            <person name="Oberlander M."/>
            <person name="Rudolph-Geiger S."/>
            <person name="Teucke M."/>
            <person name="Lanz C."/>
            <person name="Raddatz G."/>
            <person name="Osoegawa K."/>
            <person name="Zhu B."/>
            <person name="Rapp A."/>
            <person name="Widaa S."/>
            <person name="Langford C."/>
            <person name="Yang F."/>
            <person name="Schuster S.C."/>
            <person name="Carter N.P."/>
            <person name="Harrow J."/>
            <person name="Ning Z."/>
            <person name="Herrero J."/>
            <person name="Searle S.M."/>
            <person name="Enright A."/>
            <person name="Geisler R."/>
            <person name="Plasterk R.H."/>
            <person name="Lee C."/>
            <person name="Westerfield M."/>
            <person name="de Jong P.J."/>
            <person name="Zon L.I."/>
            <person name="Postlethwait J.H."/>
            <person name="Nusslein-Volhard C."/>
            <person name="Hubbard T.J."/>
            <person name="Roest Crollius H."/>
            <person name="Rogers J."/>
            <person name="Stemple D.L."/>
        </authorList>
    </citation>
    <scope>NUCLEOTIDE SEQUENCE [LARGE SCALE GENOMIC DNA]</scope>
    <source>
        <strain>Tuebingen</strain>
    </source>
</reference>
<reference key="2">
    <citation type="submission" date="2005-06" db="EMBL/GenBank/DDBJ databases">
        <authorList>
            <consortium name="NIH - Zebrafish Gene Collection (ZGC) project"/>
        </authorList>
    </citation>
    <scope>NUCLEOTIDE SEQUENCE [LARGE SCALE MRNA]</scope>
    <source>
        <tissue>Olfactory epithelium</tissue>
    </source>
</reference>
<reference key="3">
    <citation type="journal article" date="2013" name="J. Cell Sci.">
        <title>Ciliated sensory hair cell formation and function require the F-BAR protein syndapin I and the WH2 domain-based actin nucleator Cobl.</title>
        <authorList>
            <person name="Schuler S."/>
            <person name="Hauptmann J."/>
            <person name="Perner B."/>
            <person name="Kessels M.M."/>
            <person name="Englert C."/>
            <person name="Qualmann B."/>
        </authorList>
    </citation>
    <scope>FUNCTION</scope>
    <scope>SUBCELLULAR LOCATION</scope>
    <scope>INTERACTION WITH COBL</scope>
    <scope>DEVELOPMENTAL STAGE</scope>
</reference>
<evidence type="ECO:0000250" key="1"/>
<evidence type="ECO:0000255" key="2">
    <source>
        <dbReference type="PROSITE-ProRule" id="PRU00192"/>
    </source>
</evidence>
<evidence type="ECO:0000255" key="3">
    <source>
        <dbReference type="PROSITE-ProRule" id="PRU01077"/>
    </source>
</evidence>
<evidence type="ECO:0000256" key="4">
    <source>
        <dbReference type="SAM" id="MobiDB-lite"/>
    </source>
</evidence>
<evidence type="ECO:0000269" key="5">
    <source>
    </source>
</evidence>
<sequence length="445" mass="51356">MSGAYDESAMSDETTDSFWEVGNYKRTVKRIEDGHRLCNDMMSCIQERAKIEKAYSQQLTDWSKRWRQLVERGPQYGTLERAWLAVMTEAEKVSELHQEVKNNLLNEDLEKVKNWQKDAYHKQMMGGFKETKEADEGFRKAQKPWAKKLKELETAKKTYHMACKEEKIASAREANSKGEASVTTDQQKKLQEKVDKCKNDVQKAKEKYEKSLDELNKCTPQYMENMEVVFDQCQQFEEKRLNFLREVLLDTKRHLNLTESQSYATVYRELERTIVSASAQEDLKWFSSVHGPGMHMNWPQFEEFNPDLSHAISKKEKVKRNHDGVTLTQVTHGAEHGTPQTGDRGSVSSYEKNQQYSAEWSDDEQPPTAAQSASETNGGNPFEEDSKGVRVRALYDYEGQEQDELTFKAGDELTKLEDEDEQGWCKGRLDSGQLGLYPANYVEPV</sequence>
<feature type="chain" id="PRO_0000422220" description="Protein kinase C and casein kinase substrate in neurons protein 1">
    <location>
        <begin position="1"/>
        <end position="445"/>
    </location>
</feature>
<feature type="domain" description="F-BAR" evidence="3">
    <location>
        <begin position="12"/>
        <end position="282"/>
    </location>
</feature>
<feature type="domain" description="SH3" evidence="2">
    <location>
        <begin position="386"/>
        <end position="445"/>
    </location>
</feature>
<feature type="region of interest" description="Disordered" evidence="4">
    <location>
        <begin position="327"/>
        <end position="390"/>
    </location>
</feature>
<feature type="coiled-coil region" evidence="1">
    <location>
        <begin position="146"/>
        <end position="167"/>
    </location>
</feature>
<feature type="coiled-coil region" evidence="1">
    <location>
        <begin position="183"/>
        <end position="219"/>
    </location>
</feature>
<feature type="compositionally biased region" description="Polar residues" evidence="4">
    <location>
        <begin position="338"/>
        <end position="358"/>
    </location>
</feature>
<feature type="compositionally biased region" description="Polar residues" evidence="4">
    <location>
        <begin position="368"/>
        <end position="379"/>
    </location>
</feature>
<proteinExistence type="evidence at protein level"/>
<accession>Q4V920</accession>
<comment type="function">
    <text evidence="1 5">Binds to membranes via its F-BAR domain and mediates membrane tubulation. Plays a role in cellular transport processes by recruiting dynamins to membranes. Plays a role in the reorganization of the actin cytoskeleton and in neuron morphogenesis via its interaction with cobl, and by recruiting cobl to the cell cortex. Plays a role in the regulation of neurite formation, neurite branching and the regulation of neurite length. Required for normal synaptic vesicle endocytosis; this process retrieves previously released neurotransmitters to accommodate multiple cycles of neurotransmission. Required for normal excitatory and inhibitory synaptic transmission (By similarity). Required for normal embryonic development, including normal development of laterality, normal body size and shape, as well as normal brain and heart development. Required for normal development of stereocilia and kinocilia in sensory hair cells of neuromasts in the posterior lateral line organ, and thus also for balance keeping and normal swimming behavior.</text>
</comment>
<comment type="subunit">
    <text evidence="5">Interacts with cobl.</text>
</comment>
<comment type="subcellular location">
    <subcellularLocation>
        <location evidence="5">Cytoplasm</location>
    </subcellularLocation>
    <subcellularLocation>
        <location evidence="5">Cytoplasm</location>
        <location evidence="5">Cytosol</location>
    </subcellularLocation>
    <subcellularLocation>
        <location evidence="5">Cell membrane</location>
        <topology evidence="5">Peripheral membrane protein</topology>
        <orientation evidence="5">Cytoplasmic side</orientation>
    </subcellularLocation>
    <subcellularLocation>
        <location evidence="1">Cell projection</location>
    </subcellularLocation>
    <subcellularLocation>
        <location evidence="1">Synapse</location>
        <location evidence="1">Synaptosome</location>
    </subcellularLocation>
    <subcellularLocation>
        <location evidence="1">Synapse</location>
    </subcellularLocation>
    <subcellularLocation>
        <location evidence="1">Cytoplasmic vesicle membrane</location>
        <topology evidence="1">Peripheral membrane protein</topology>
    </subcellularLocation>
    <subcellularLocation>
        <location evidence="1">Cell projection</location>
        <location evidence="1">Ruffle membrane</location>
    </subcellularLocation>
    <subcellularLocation>
        <location evidence="1">Membrane</location>
        <topology evidence="1">Peripheral membrane protein</topology>
    </subcellularLocation>
    <text evidence="1">Detected in axons. In primary neuronal cultures, present at a high level in presynaptic nerve terminals and in the cell body. Detected at vesicular structures in neuron cell bodies and neurites (By similarity). Detected at the apical surface of cells at the basis of forming cilia, but not in the cilia themselves.</text>
</comment>
<comment type="developmental stage">
    <text evidence="5">Highly expressed throughout embryogenesis, from fertilization to hatching. Detected in embryonic neuronal tissues, including forebrain, hindbrain, spinal cord and retina.</text>
</comment>
<comment type="domain">
    <text evidence="1">The F-BAR domain mediates membrane-binding and membrane tubulation.</text>
</comment>
<organism>
    <name type="scientific">Danio rerio</name>
    <name type="common">Zebrafish</name>
    <name type="synonym">Brachydanio rerio</name>
    <dbReference type="NCBI Taxonomy" id="7955"/>
    <lineage>
        <taxon>Eukaryota</taxon>
        <taxon>Metazoa</taxon>
        <taxon>Chordata</taxon>
        <taxon>Craniata</taxon>
        <taxon>Vertebrata</taxon>
        <taxon>Euteleostomi</taxon>
        <taxon>Actinopterygii</taxon>
        <taxon>Neopterygii</taxon>
        <taxon>Teleostei</taxon>
        <taxon>Ostariophysi</taxon>
        <taxon>Cypriniformes</taxon>
        <taxon>Danionidae</taxon>
        <taxon>Danioninae</taxon>
        <taxon>Danio</taxon>
    </lineage>
</organism>
<keyword id="KW-1003">Cell membrane</keyword>
<keyword id="KW-0966">Cell projection</keyword>
<keyword id="KW-0175">Coiled coil</keyword>
<keyword id="KW-0963">Cytoplasm</keyword>
<keyword id="KW-0968">Cytoplasmic vesicle</keyword>
<keyword id="KW-0254">Endocytosis</keyword>
<keyword id="KW-0446">Lipid-binding</keyword>
<keyword id="KW-0472">Membrane</keyword>
<keyword id="KW-1185">Reference proteome</keyword>
<keyword id="KW-0728">SH3 domain</keyword>
<keyword id="KW-0770">Synapse</keyword>
<keyword id="KW-0771">Synaptosome</keyword>
<gene>
    <name type="primary">pacsin1b</name>
    <name type="synonym">pacsin1</name>
</gene>
<dbReference type="EMBL" id="CU694224">
    <property type="status" value="NOT_ANNOTATED_CDS"/>
    <property type="molecule type" value="Genomic_DNA"/>
</dbReference>
<dbReference type="EMBL" id="CU855791">
    <property type="status" value="NOT_ANNOTATED_CDS"/>
    <property type="molecule type" value="Genomic_DNA"/>
</dbReference>
<dbReference type="EMBL" id="CU855800">
    <property type="status" value="NOT_ANNOTATED_CDS"/>
    <property type="molecule type" value="Genomic_DNA"/>
</dbReference>
<dbReference type="EMBL" id="CU914470">
    <property type="status" value="NOT_ANNOTATED_CDS"/>
    <property type="molecule type" value="Genomic_DNA"/>
</dbReference>
<dbReference type="EMBL" id="BC097107">
    <property type="protein sequence ID" value="AAH97107.1"/>
    <property type="molecule type" value="mRNA"/>
</dbReference>
<dbReference type="RefSeq" id="NP_001028900.1">
    <property type="nucleotide sequence ID" value="NM_001033728.1"/>
</dbReference>
<dbReference type="RefSeq" id="XP_005166197.1">
    <property type="nucleotide sequence ID" value="XM_005166140.4"/>
</dbReference>
<dbReference type="RefSeq" id="XP_009301003.1">
    <property type="nucleotide sequence ID" value="XM_009302728.4"/>
</dbReference>
<dbReference type="RefSeq" id="XP_068077885.1">
    <property type="nucleotide sequence ID" value="XM_068221784.1"/>
</dbReference>
<dbReference type="SMR" id="Q4V920"/>
<dbReference type="FunCoup" id="Q4V920">
    <property type="interactions" value="1604"/>
</dbReference>
<dbReference type="STRING" id="7955.ENSDARP00000056829"/>
<dbReference type="PaxDb" id="7955-ENSDARP00000107643"/>
<dbReference type="Ensembl" id="ENSDART00000056830">
    <property type="protein sequence ID" value="ENSDARP00000056829"/>
    <property type="gene ID" value="ENSDARG00000042128"/>
</dbReference>
<dbReference type="Ensembl" id="ENSDART00000128456">
    <property type="protein sequence ID" value="ENSDARP00000107643"/>
    <property type="gene ID" value="ENSDARG00000042128"/>
</dbReference>
<dbReference type="Ensembl" id="ENSDART00000162469">
    <property type="protein sequence ID" value="ENSDARP00000136926"/>
    <property type="gene ID" value="ENSDARG00000042128"/>
</dbReference>
<dbReference type="GeneID" id="619246"/>
<dbReference type="KEGG" id="dre:619246"/>
<dbReference type="AGR" id="ZFIN:ZDB-GENE-050913-35"/>
<dbReference type="CTD" id="619246"/>
<dbReference type="ZFIN" id="ZDB-GENE-050913-35">
    <property type="gene designation" value="pacsin1b"/>
</dbReference>
<dbReference type="eggNOG" id="KOG2856">
    <property type="taxonomic scope" value="Eukaryota"/>
</dbReference>
<dbReference type="HOGENOM" id="CLU_030752_0_0_1"/>
<dbReference type="InParanoid" id="Q4V920"/>
<dbReference type="OMA" id="ACQMKEL"/>
<dbReference type="OrthoDB" id="10255128at2759"/>
<dbReference type="PhylomeDB" id="Q4V920"/>
<dbReference type="TreeFam" id="TF313677"/>
<dbReference type="PRO" id="PR:Q4V920"/>
<dbReference type="Proteomes" id="UP000000437">
    <property type="component" value="Chromosome 6"/>
</dbReference>
<dbReference type="Bgee" id="ENSDARG00000042128">
    <property type="expression patterns" value="Expressed in intestine and 28 other cell types or tissues"/>
</dbReference>
<dbReference type="ExpressionAtlas" id="Q4V920">
    <property type="expression patterns" value="baseline and differential"/>
</dbReference>
<dbReference type="GO" id="GO:0005737">
    <property type="term" value="C:cytoplasm"/>
    <property type="evidence" value="ECO:0000318"/>
    <property type="project" value="GO_Central"/>
</dbReference>
<dbReference type="GO" id="GO:0030659">
    <property type="term" value="C:cytoplasmic vesicle membrane"/>
    <property type="evidence" value="ECO:0007669"/>
    <property type="project" value="UniProtKB-SubCell"/>
</dbReference>
<dbReference type="GO" id="GO:0005829">
    <property type="term" value="C:cytosol"/>
    <property type="evidence" value="ECO:0007669"/>
    <property type="project" value="UniProtKB-SubCell"/>
</dbReference>
<dbReference type="GO" id="GO:0005768">
    <property type="term" value="C:endosome"/>
    <property type="evidence" value="ECO:0000318"/>
    <property type="project" value="GO_Central"/>
</dbReference>
<dbReference type="GO" id="GO:0043005">
    <property type="term" value="C:neuron projection"/>
    <property type="evidence" value="ECO:0007669"/>
    <property type="project" value="UniProtKB-KW"/>
</dbReference>
<dbReference type="GO" id="GO:0032587">
    <property type="term" value="C:ruffle membrane"/>
    <property type="evidence" value="ECO:0007669"/>
    <property type="project" value="UniProtKB-SubCell"/>
</dbReference>
<dbReference type="GO" id="GO:0045202">
    <property type="term" value="C:synapse"/>
    <property type="evidence" value="ECO:0007669"/>
    <property type="project" value="UniProtKB-SubCell"/>
</dbReference>
<dbReference type="GO" id="GO:0005543">
    <property type="term" value="F:phospholipid binding"/>
    <property type="evidence" value="ECO:0000318"/>
    <property type="project" value="GO_Central"/>
</dbReference>
<dbReference type="GO" id="GO:0007015">
    <property type="term" value="P:actin filament organization"/>
    <property type="evidence" value="ECO:0007669"/>
    <property type="project" value="InterPro"/>
</dbReference>
<dbReference type="GO" id="GO:0060088">
    <property type="term" value="P:auditory receptor cell stereocilium organization"/>
    <property type="evidence" value="ECO:0000315"/>
    <property type="project" value="ZFIN"/>
</dbReference>
<dbReference type="GO" id="GO:0060271">
    <property type="term" value="P:cilium assembly"/>
    <property type="evidence" value="ECO:0000316"/>
    <property type="project" value="ZFIN"/>
</dbReference>
<dbReference type="GO" id="GO:0007010">
    <property type="term" value="P:cytoskeleton organization"/>
    <property type="evidence" value="ECO:0000318"/>
    <property type="project" value="GO_Central"/>
</dbReference>
<dbReference type="GO" id="GO:0006897">
    <property type="term" value="P:endocytosis"/>
    <property type="evidence" value="ECO:0007669"/>
    <property type="project" value="UniProtKB-KW"/>
</dbReference>
<dbReference type="GO" id="GO:0048812">
    <property type="term" value="P:neuron projection morphogenesis"/>
    <property type="evidence" value="ECO:0000318"/>
    <property type="project" value="GO_Central"/>
</dbReference>
<dbReference type="GO" id="GO:0097320">
    <property type="term" value="P:plasma membrane tubulation"/>
    <property type="evidence" value="ECO:0000318"/>
    <property type="project" value="GO_Central"/>
</dbReference>
<dbReference type="GO" id="GO:1900006">
    <property type="term" value="P:positive regulation of dendrite development"/>
    <property type="evidence" value="ECO:0000318"/>
    <property type="project" value="GO_Central"/>
</dbReference>
<dbReference type="GO" id="GO:0030100">
    <property type="term" value="P:regulation of endocytosis"/>
    <property type="evidence" value="ECO:0000318"/>
    <property type="project" value="GO_Central"/>
</dbReference>
<dbReference type="CDD" id="cd07680">
    <property type="entry name" value="F-BAR_PACSIN1"/>
    <property type="match status" value="1"/>
</dbReference>
<dbReference type="CDD" id="cd11998">
    <property type="entry name" value="SH3_PACSIN1-2"/>
    <property type="match status" value="1"/>
</dbReference>
<dbReference type="FunFam" id="2.30.30.40:FF:000014">
    <property type="entry name" value="Kinase C and casein kinase substrate in neurons protein"/>
    <property type="match status" value="1"/>
</dbReference>
<dbReference type="FunFam" id="1.20.1270.60:FF:000205">
    <property type="entry name" value="Protein kinase C and casein kinase substrate in neurons protein 1"/>
    <property type="match status" value="1"/>
</dbReference>
<dbReference type="Gene3D" id="1.20.1270.60">
    <property type="entry name" value="Arfaptin homology (AH) domain/BAR domain"/>
    <property type="match status" value="1"/>
</dbReference>
<dbReference type="Gene3D" id="2.30.30.40">
    <property type="entry name" value="SH3 Domains"/>
    <property type="match status" value="1"/>
</dbReference>
<dbReference type="InterPro" id="IPR027267">
    <property type="entry name" value="AH/BAR_dom_sf"/>
</dbReference>
<dbReference type="InterPro" id="IPR031160">
    <property type="entry name" value="F_BAR"/>
</dbReference>
<dbReference type="InterPro" id="IPR001060">
    <property type="entry name" value="FCH_dom"/>
</dbReference>
<dbReference type="InterPro" id="IPR035743">
    <property type="entry name" value="PACSIN1/PACSIN2_SH3"/>
</dbReference>
<dbReference type="InterPro" id="IPR037454">
    <property type="entry name" value="PACSIN1_F-BAR"/>
</dbReference>
<dbReference type="InterPro" id="IPR036028">
    <property type="entry name" value="SH3-like_dom_sf"/>
</dbReference>
<dbReference type="InterPro" id="IPR001452">
    <property type="entry name" value="SH3_domain"/>
</dbReference>
<dbReference type="PANTHER" id="PTHR23065">
    <property type="entry name" value="PROLINE-SERINE-THREONINE PHOSPHATASE INTERACTING PROTEIN 1"/>
    <property type="match status" value="1"/>
</dbReference>
<dbReference type="PANTHER" id="PTHR23065:SF16">
    <property type="entry name" value="PROTEIN KINASE C AND CASEIN KINASE SUBSTRATE IN NEURONS PROTEIN 1"/>
    <property type="match status" value="1"/>
</dbReference>
<dbReference type="Pfam" id="PF00611">
    <property type="entry name" value="FCH"/>
    <property type="match status" value="1"/>
</dbReference>
<dbReference type="Pfam" id="PF00018">
    <property type="entry name" value="SH3_1"/>
    <property type="match status" value="1"/>
</dbReference>
<dbReference type="PRINTS" id="PR00452">
    <property type="entry name" value="SH3DOMAIN"/>
</dbReference>
<dbReference type="SMART" id="SM00055">
    <property type="entry name" value="FCH"/>
    <property type="match status" value="1"/>
</dbReference>
<dbReference type="SMART" id="SM00326">
    <property type="entry name" value="SH3"/>
    <property type="match status" value="1"/>
</dbReference>
<dbReference type="SUPFAM" id="SSF103657">
    <property type="entry name" value="BAR/IMD domain-like"/>
    <property type="match status" value="1"/>
</dbReference>
<dbReference type="SUPFAM" id="SSF50044">
    <property type="entry name" value="SH3-domain"/>
    <property type="match status" value="1"/>
</dbReference>
<dbReference type="PROSITE" id="PS51741">
    <property type="entry name" value="F_BAR"/>
    <property type="match status" value="1"/>
</dbReference>
<dbReference type="PROSITE" id="PS50002">
    <property type="entry name" value="SH3"/>
    <property type="match status" value="1"/>
</dbReference>